<dbReference type="EMBL" id="AY653733">
    <property type="protein sequence ID" value="AAV51040.1"/>
    <property type="molecule type" value="Genomic_DNA"/>
</dbReference>
<dbReference type="PDB" id="7JID">
    <property type="method" value="X-ray"/>
    <property type="resolution" value="1.45 A"/>
    <property type="chains" value="A/B=1-289"/>
</dbReference>
<dbReference type="PDBsum" id="7JID"/>
<dbReference type="SMR" id="Q5UPS5"/>
<dbReference type="KEGG" id="vg:9925441"/>
<dbReference type="OrthoDB" id="33001at10239"/>
<dbReference type="Proteomes" id="UP000001134">
    <property type="component" value="Genome"/>
</dbReference>
<dbReference type="GO" id="GO:0048269">
    <property type="term" value="C:methionine adenosyltransferase complex"/>
    <property type="evidence" value="ECO:0007669"/>
    <property type="project" value="TreeGrafter"/>
</dbReference>
<dbReference type="GO" id="GO:0048270">
    <property type="term" value="F:methionine adenosyltransferase regulator activity"/>
    <property type="evidence" value="ECO:0007669"/>
    <property type="project" value="TreeGrafter"/>
</dbReference>
<dbReference type="GO" id="GO:0006556">
    <property type="term" value="P:S-adenosylmethionine biosynthetic process"/>
    <property type="evidence" value="ECO:0007669"/>
    <property type="project" value="TreeGrafter"/>
</dbReference>
<dbReference type="Gene3D" id="3.40.50.720">
    <property type="entry name" value="NAD(P)-binding Rossmann-like Domain"/>
    <property type="match status" value="1"/>
</dbReference>
<dbReference type="InterPro" id="IPR005913">
    <property type="entry name" value="dTDP_dehydrorham_reduct"/>
</dbReference>
<dbReference type="InterPro" id="IPR036291">
    <property type="entry name" value="NAD(P)-bd_dom_sf"/>
</dbReference>
<dbReference type="InterPro" id="IPR029903">
    <property type="entry name" value="RmlD-like-bd"/>
</dbReference>
<dbReference type="PANTHER" id="PTHR10491">
    <property type="entry name" value="DTDP-4-DEHYDRORHAMNOSE REDUCTASE"/>
    <property type="match status" value="1"/>
</dbReference>
<dbReference type="PANTHER" id="PTHR10491:SF4">
    <property type="entry name" value="METHIONINE ADENOSYLTRANSFERASE 2 SUBUNIT BETA"/>
    <property type="match status" value="1"/>
</dbReference>
<dbReference type="Pfam" id="PF04321">
    <property type="entry name" value="RmlD_sub_bind"/>
    <property type="match status" value="1"/>
</dbReference>
<dbReference type="SUPFAM" id="SSF51735">
    <property type="entry name" value="NAD(P)-binding Rossmann-fold domains"/>
    <property type="match status" value="1"/>
</dbReference>
<organism>
    <name type="scientific">Acanthamoeba polyphaga mimivirus</name>
    <name type="common">APMV</name>
    <dbReference type="NCBI Taxonomy" id="212035"/>
    <lineage>
        <taxon>Viruses</taxon>
        <taxon>Varidnaviria</taxon>
        <taxon>Bamfordvirae</taxon>
        <taxon>Nucleocytoviricota</taxon>
        <taxon>Megaviricetes</taxon>
        <taxon>Imitervirales</taxon>
        <taxon>Mimiviridae</taxon>
        <taxon>Megamimivirinae</taxon>
        <taxon>Mimivirus</taxon>
        <taxon>Mimivirus bradfordmassiliense</taxon>
    </lineage>
</organism>
<gene>
    <name type="ordered locus">MIMI_L780</name>
</gene>
<reference key="1">
    <citation type="journal article" date="2004" name="Science">
        <title>The 1.2-megabase genome sequence of Mimivirus.</title>
        <authorList>
            <person name="Raoult D."/>
            <person name="Audic S."/>
            <person name="Robert C."/>
            <person name="Abergel C."/>
            <person name="Renesto P."/>
            <person name="Ogata H."/>
            <person name="La Scola B."/>
            <person name="Susan M."/>
            <person name="Claverie J.-M."/>
        </authorList>
    </citation>
    <scope>NUCLEOTIDE SEQUENCE [LARGE SCALE GENOMIC DNA]</scope>
    <source>
        <strain>Rowbotham-Bradford</strain>
    </source>
</reference>
<feature type="chain" id="PRO_0000250635" description="Uncharacterized protein L780">
    <location>
        <begin position="1"/>
        <end position="289"/>
    </location>
</feature>
<feature type="strand" evidence="1">
    <location>
        <begin position="2"/>
        <end position="6"/>
    </location>
</feature>
<feature type="turn" evidence="1">
    <location>
        <begin position="7"/>
        <end position="9"/>
    </location>
</feature>
<feature type="helix" evidence="1">
    <location>
        <begin position="11"/>
        <end position="22"/>
    </location>
</feature>
<feature type="strand" evidence="1">
    <location>
        <begin position="26"/>
        <end position="29"/>
    </location>
</feature>
<feature type="helix" evidence="1">
    <location>
        <begin position="37"/>
        <end position="47"/>
    </location>
</feature>
<feature type="strand" evidence="1">
    <location>
        <begin position="50"/>
        <end position="54"/>
    </location>
</feature>
<feature type="strand" evidence="1">
    <location>
        <begin position="64"/>
        <end position="66"/>
    </location>
</feature>
<feature type="helix" evidence="1">
    <location>
        <begin position="67"/>
        <end position="71"/>
    </location>
</feature>
<feature type="helix" evidence="1">
    <location>
        <begin position="76"/>
        <end position="83"/>
    </location>
</feature>
<feature type="helix" evidence="1">
    <location>
        <begin position="85"/>
        <end position="96"/>
    </location>
</feature>
<feature type="strand" evidence="1">
    <location>
        <begin position="100"/>
        <end position="107"/>
    </location>
</feature>
<feature type="helix" evidence="1">
    <location>
        <begin position="135"/>
        <end position="147"/>
    </location>
</feature>
<feature type="helix" evidence="1">
    <location>
        <begin position="148"/>
        <end position="150"/>
    </location>
</feature>
<feature type="turn" evidence="1">
    <location>
        <begin position="151"/>
        <end position="153"/>
    </location>
</feature>
<feature type="strand" evidence="1">
    <location>
        <begin position="154"/>
        <end position="159"/>
    </location>
</feature>
<feature type="helix" evidence="1">
    <location>
        <begin position="172"/>
        <end position="178"/>
    </location>
</feature>
<feature type="strand" evidence="1">
    <location>
        <begin position="180"/>
        <end position="182"/>
    </location>
</feature>
<feature type="helix" evidence="1">
    <location>
        <begin position="192"/>
        <end position="204"/>
    </location>
</feature>
<feature type="strand" evidence="1">
    <location>
        <begin position="209"/>
        <end position="212"/>
    </location>
</feature>
<feature type="helix" evidence="1">
    <location>
        <begin position="221"/>
        <end position="231"/>
    </location>
</feature>
<feature type="helix" evidence="1">
    <location>
        <begin position="243"/>
        <end position="249"/>
    </location>
</feature>
<feature type="strand" evidence="1">
    <location>
        <begin position="250"/>
        <end position="252"/>
    </location>
</feature>
<feature type="helix" evidence="1">
    <location>
        <begin position="262"/>
        <end position="267"/>
    </location>
</feature>
<feature type="helix" evidence="1">
    <location>
        <begin position="274"/>
        <end position="284"/>
    </location>
</feature>
<protein>
    <recommendedName>
        <fullName>Uncharacterized protein L780</fullName>
    </recommendedName>
</protein>
<evidence type="ECO:0007829" key="1">
    <source>
        <dbReference type="PDB" id="7JID"/>
    </source>
</evidence>
<keyword id="KW-0002">3D-structure</keyword>
<keyword id="KW-1185">Reference proteome</keyword>
<organismHost>
    <name type="scientific">Acanthamoeba polyphaga</name>
    <name type="common">Amoeba</name>
    <dbReference type="NCBI Taxonomy" id="5757"/>
</organismHost>
<name>YL780_MIMIV</name>
<sequence>MKWLIFGNKGWIGSMVSKILEQQGEQVVGAQSRADDESAVEREISEIKPDRVMSFIGRTHGPGYSTIDYLEQSGKLVENVKDNLYGPLCLAFICQKYNIHLTYLGTGCIFEGQNNFSADEKGFTENDKPNFFGSSYSVVKGFTDRLMHFFDNDVLNLRIRMPITIEQNPRSFITKILSYSRICSIPNSMTILDQMIPVMIDMARNKTTGTFNFTNPGLVSHNEILSLIRDIHKPNLTWENMSREQQLAILKADRSNNLLNTDKLQSLYPDVPDILTGIREVVSKMKFQQ</sequence>
<accession>Q5UPS5</accession>
<proteinExistence type="evidence at protein level"/>